<feature type="chain" id="PRO_0000250069" description="Anhydro-N-acetylmuramic acid kinase">
    <location>
        <begin position="1"/>
        <end position="379"/>
    </location>
</feature>
<feature type="binding site" evidence="1">
    <location>
        <begin position="9"/>
        <end position="16"/>
    </location>
    <ligand>
        <name>ATP</name>
        <dbReference type="ChEBI" id="CHEBI:30616"/>
    </ligand>
</feature>
<accession>Q3AH85</accession>
<comment type="function">
    <text evidence="1">Catalyzes the specific phosphorylation of 1,6-anhydro-N-acetylmuramic acid (anhMurNAc) with the simultaneous cleavage of the 1,6-anhydro ring, generating MurNAc-6-P. Is required for the utilization of anhMurNAc either imported from the medium or derived from its own cell wall murein, and thus plays a role in cell wall recycling.</text>
</comment>
<comment type="catalytic activity">
    <reaction evidence="1">
        <text>1,6-anhydro-N-acetyl-beta-muramate + ATP + H2O = N-acetyl-D-muramate 6-phosphate + ADP + H(+)</text>
        <dbReference type="Rhea" id="RHEA:24952"/>
        <dbReference type="ChEBI" id="CHEBI:15377"/>
        <dbReference type="ChEBI" id="CHEBI:15378"/>
        <dbReference type="ChEBI" id="CHEBI:30616"/>
        <dbReference type="ChEBI" id="CHEBI:58690"/>
        <dbReference type="ChEBI" id="CHEBI:58722"/>
        <dbReference type="ChEBI" id="CHEBI:456216"/>
        <dbReference type="EC" id="2.7.1.170"/>
    </reaction>
</comment>
<comment type="pathway">
    <text evidence="1">Amino-sugar metabolism; 1,6-anhydro-N-acetylmuramate degradation.</text>
</comment>
<comment type="pathway">
    <text evidence="1">Cell wall biogenesis; peptidoglycan recycling.</text>
</comment>
<comment type="similarity">
    <text evidence="1">Belongs to the anhydro-N-acetylmuramic acid kinase family.</text>
</comment>
<dbReference type="EC" id="2.7.1.170" evidence="1"/>
<dbReference type="EMBL" id="CP000110">
    <property type="protein sequence ID" value="ABB36047.1"/>
    <property type="molecule type" value="Genomic_DNA"/>
</dbReference>
<dbReference type="RefSeq" id="WP_011365245.1">
    <property type="nucleotide sequence ID" value="NC_007516.1"/>
</dbReference>
<dbReference type="SMR" id="Q3AH85"/>
<dbReference type="STRING" id="110662.Syncc9605_2315"/>
<dbReference type="KEGG" id="syd:Syncc9605_2315"/>
<dbReference type="eggNOG" id="COG2377">
    <property type="taxonomic scope" value="Bacteria"/>
</dbReference>
<dbReference type="HOGENOM" id="CLU_038782_1_0_3"/>
<dbReference type="OrthoDB" id="9763949at2"/>
<dbReference type="UniPathway" id="UPA00343"/>
<dbReference type="UniPathway" id="UPA00544"/>
<dbReference type="GO" id="GO:0005524">
    <property type="term" value="F:ATP binding"/>
    <property type="evidence" value="ECO:0007669"/>
    <property type="project" value="UniProtKB-UniRule"/>
</dbReference>
<dbReference type="GO" id="GO:0016301">
    <property type="term" value="F:kinase activity"/>
    <property type="evidence" value="ECO:0007669"/>
    <property type="project" value="UniProtKB-KW"/>
</dbReference>
<dbReference type="GO" id="GO:0016773">
    <property type="term" value="F:phosphotransferase activity, alcohol group as acceptor"/>
    <property type="evidence" value="ECO:0007669"/>
    <property type="project" value="UniProtKB-UniRule"/>
</dbReference>
<dbReference type="GO" id="GO:0097175">
    <property type="term" value="P:1,6-anhydro-N-acetyl-beta-muramic acid catabolic process"/>
    <property type="evidence" value="ECO:0007669"/>
    <property type="project" value="UniProtKB-UniRule"/>
</dbReference>
<dbReference type="GO" id="GO:0006040">
    <property type="term" value="P:amino sugar metabolic process"/>
    <property type="evidence" value="ECO:0007669"/>
    <property type="project" value="InterPro"/>
</dbReference>
<dbReference type="GO" id="GO:0009254">
    <property type="term" value="P:peptidoglycan turnover"/>
    <property type="evidence" value="ECO:0007669"/>
    <property type="project" value="UniProtKB-UniRule"/>
</dbReference>
<dbReference type="Gene3D" id="3.30.420.40">
    <property type="match status" value="2"/>
</dbReference>
<dbReference type="HAMAP" id="MF_01270">
    <property type="entry name" value="AnhMurNAc_kinase"/>
    <property type="match status" value="1"/>
</dbReference>
<dbReference type="InterPro" id="IPR005338">
    <property type="entry name" value="Anhydro_N_Ac-Mur_kinase"/>
</dbReference>
<dbReference type="InterPro" id="IPR043129">
    <property type="entry name" value="ATPase_NBD"/>
</dbReference>
<dbReference type="NCBIfam" id="NF007145">
    <property type="entry name" value="PRK09585.2-5"/>
    <property type="match status" value="1"/>
</dbReference>
<dbReference type="PANTHER" id="PTHR30605">
    <property type="entry name" value="ANHYDRO-N-ACETYLMURAMIC ACID KINASE"/>
    <property type="match status" value="1"/>
</dbReference>
<dbReference type="PANTHER" id="PTHR30605:SF0">
    <property type="entry name" value="ANHYDRO-N-ACETYLMURAMIC ACID KINASE"/>
    <property type="match status" value="1"/>
</dbReference>
<dbReference type="Pfam" id="PF03702">
    <property type="entry name" value="AnmK"/>
    <property type="match status" value="1"/>
</dbReference>
<dbReference type="SUPFAM" id="SSF53067">
    <property type="entry name" value="Actin-like ATPase domain"/>
    <property type="match status" value="1"/>
</dbReference>
<organism>
    <name type="scientific">Synechococcus sp. (strain CC9605)</name>
    <dbReference type="NCBI Taxonomy" id="110662"/>
    <lineage>
        <taxon>Bacteria</taxon>
        <taxon>Bacillati</taxon>
        <taxon>Cyanobacteriota</taxon>
        <taxon>Cyanophyceae</taxon>
        <taxon>Synechococcales</taxon>
        <taxon>Synechococcaceae</taxon>
        <taxon>Synechococcus</taxon>
    </lineage>
</organism>
<name>ANMK_SYNSC</name>
<proteinExistence type="inferred from homology"/>
<sequence>MHCLGLMSGTSADGVDAVLARFDGPPQRPQWSLLRHHHQSYPLELQRQVVAAGQGAPMPAALWLELAEAITEAQAEAALACDPDAKAELIGCHGQTVWHRPPADEARGASWQMLLAPLLAHRLQRPVVHDFRAADLALGGQGAPLVPRADAALLGSTQGWRALLNLGGIANLTLIPPCSGNDRHAAVLGWDCGPANSLIDLGMRQFTNGAQSFDQGGAMAAQGHADELWIQRWLEEEYFQLAPPKSTGRECFGQADLNRRLKQLGGASAADAIATLTAFSAAVVAQDLEHLRQSVGIAPIELITAGGGSQNPVLIDELRRRCRGAQLDASSSLGVPTEAREALVFALLAWWQERGHPGNVPAVTGASREAVLGVRVNPA</sequence>
<gene>
    <name evidence="1" type="primary">anmK</name>
    <name type="ordered locus">Syncc9605_2315</name>
</gene>
<reference key="1">
    <citation type="submission" date="2005-07" db="EMBL/GenBank/DDBJ databases">
        <title>Complete sequence of Synechococcus sp. CC9605.</title>
        <authorList>
            <consortium name="US DOE Joint Genome Institute"/>
            <person name="Copeland A."/>
            <person name="Lucas S."/>
            <person name="Lapidus A."/>
            <person name="Barry K."/>
            <person name="Detter J.C."/>
            <person name="Glavina T."/>
            <person name="Hammon N."/>
            <person name="Israni S."/>
            <person name="Pitluck S."/>
            <person name="Schmutz J."/>
            <person name="Martinez M."/>
            <person name="Larimer F."/>
            <person name="Land M."/>
            <person name="Kyrpides N."/>
            <person name="Ivanova N."/>
            <person name="Richardson P."/>
        </authorList>
    </citation>
    <scope>NUCLEOTIDE SEQUENCE [LARGE SCALE GENOMIC DNA]</scope>
    <source>
        <strain>CC9605</strain>
    </source>
</reference>
<keyword id="KW-0067">ATP-binding</keyword>
<keyword id="KW-0119">Carbohydrate metabolism</keyword>
<keyword id="KW-0418">Kinase</keyword>
<keyword id="KW-0547">Nucleotide-binding</keyword>
<keyword id="KW-0808">Transferase</keyword>
<protein>
    <recommendedName>
        <fullName evidence="1">Anhydro-N-acetylmuramic acid kinase</fullName>
        <ecNumber evidence="1">2.7.1.170</ecNumber>
    </recommendedName>
    <alternativeName>
        <fullName evidence="1">AnhMurNAc kinase</fullName>
    </alternativeName>
</protein>
<evidence type="ECO:0000255" key="1">
    <source>
        <dbReference type="HAMAP-Rule" id="MF_01270"/>
    </source>
</evidence>